<accession>Q7VQN1</accession>
<evidence type="ECO:0000255" key="1">
    <source>
        <dbReference type="HAMAP-Rule" id="MF_00539"/>
    </source>
</evidence>
<evidence type="ECO:0000256" key="2">
    <source>
        <dbReference type="SAM" id="MobiDB-lite"/>
    </source>
</evidence>
<evidence type="ECO:0000305" key="3"/>
<feature type="chain" id="PRO_0000181066" description="Large ribosomal subunit protein bL27">
    <location>
        <begin position="1"/>
        <end position="85"/>
    </location>
</feature>
<feature type="region of interest" description="Disordered" evidence="2">
    <location>
        <begin position="1"/>
        <end position="21"/>
    </location>
</feature>
<gene>
    <name evidence="1" type="primary">rpmA</name>
    <name type="ordered locus">Bfl094</name>
</gene>
<comment type="similarity">
    <text evidence="1">Belongs to the bacterial ribosomal protein bL27 family.</text>
</comment>
<keyword id="KW-1185">Reference proteome</keyword>
<keyword id="KW-0687">Ribonucleoprotein</keyword>
<keyword id="KW-0689">Ribosomal protein</keyword>
<reference key="1">
    <citation type="journal article" date="2003" name="Proc. Natl. Acad. Sci. U.S.A.">
        <title>The genome sequence of Blochmannia floridanus: comparative analysis of reduced genomes.</title>
        <authorList>
            <person name="Gil R."/>
            <person name="Silva F.J."/>
            <person name="Zientz E."/>
            <person name="Delmotte F."/>
            <person name="Gonzalez-Candelas F."/>
            <person name="Latorre A."/>
            <person name="Rausell C."/>
            <person name="Kamerbeek J."/>
            <person name="Gadau J."/>
            <person name="Hoelldobler B."/>
            <person name="van Ham R.C.H.J."/>
            <person name="Gross R."/>
            <person name="Moya A."/>
        </authorList>
    </citation>
    <scope>NUCLEOTIDE SEQUENCE [LARGE SCALE GENOMIC DNA]</scope>
</reference>
<sequence>MAHKKAGGSTRNGRDSRGKRLGVKHFGGEIISAGTIIVRQRGNKFHPGKYVGCGRDHTLFALQSGKLLFEKKGKLQRRLVSIIVE</sequence>
<organism>
    <name type="scientific">Blochmanniella floridana</name>
    <dbReference type="NCBI Taxonomy" id="203907"/>
    <lineage>
        <taxon>Bacteria</taxon>
        <taxon>Pseudomonadati</taxon>
        <taxon>Pseudomonadota</taxon>
        <taxon>Gammaproteobacteria</taxon>
        <taxon>Enterobacterales</taxon>
        <taxon>Enterobacteriaceae</taxon>
        <taxon>ant endosymbionts</taxon>
        <taxon>Candidatus Blochmanniella</taxon>
    </lineage>
</organism>
<name>RL27_BLOFL</name>
<protein>
    <recommendedName>
        <fullName evidence="1">Large ribosomal subunit protein bL27</fullName>
    </recommendedName>
    <alternativeName>
        <fullName evidence="3">50S ribosomal protein L27</fullName>
    </alternativeName>
</protein>
<proteinExistence type="inferred from homology"/>
<dbReference type="EMBL" id="BX248583">
    <property type="protein sequence ID" value="CAD83617.1"/>
    <property type="molecule type" value="Genomic_DNA"/>
</dbReference>
<dbReference type="SMR" id="Q7VQN1"/>
<dbReference type="STRING" id="203907.Bfl094"/>
<dbReference type="KEGG" id="bfl:Bfl094"/>
<dbReference type="eggNOG" id="COG0211">
    <property type="taxonomic scope" value="Bacteria"/>
</dbReference>
<dbReference type="HOGENOM" id="CLU_095424_4_1_6"/>
<dbReference type="OrthoDB" id="9803474at2"/>
<dbReference type="Proteomes" id="UP000002192">
    <property type="component" value="Chromosome"/>
</dbReference>
<dbReference type="GO" id="GO:0022625">
    <property type="term" value="C:cytosolic large ribosomal subunit"/>
    <property type="evidence" value="ECO:0007669"/>
    <property type="project" value="TreeGrafter"/>
</dbReference>
<dbReference type="GO" id="GO:0003735">
    <property type="term" value="F:structural constituent of ribosome"/>
    <property type="evidence" value="ECO:0007669"/>
    <property type="project" value="InterPro"/>
</dbReference>
<dbReference type="GO" id="GO:0006412">
    <property type="term" value="P:translation"/>
    <property type="evidence" value="ECO:0007669"/>
    <property type="project" value="UniProtKB-UniRule"/>
</dbReference>
<dbReference type="FunFam" id="2.40.50.100:FF:000020">
    <property type="entry name" value="50S ribosomal protein L27"/>
    <property type="match status" value="1"/>
</dbReference>
<dbReference type="Gene3D" id="2.40.50.100">
    <property type="match status" value="1"/>
</dbReference>
<dbReference type="HAMAP" id="MF_00539">
    <property type="entry name" value="Ribosomal_bL27"/>
    <property type="match status" value="1"/>
</dbReference>
<dbReference type="InterPro" id="IPR001684">
    <property type="entry name" value="Ribosomal_bL27"/>
</dbReference>
<dbReference type="InterPro" id="IPR018261">
    <property type="entry name" value="Ribosomal_bL27_CS"/>
</dbReference>
<dbReference type="NCBIfam" id="TIGR00062">
    <property type="entry name" value="L27"/>
    <property type="match status" value="1"/>
</dbReference>
<dbReference type="PANTHER" id="PTHR15893:SF0">
    <property type="entry name" value="LARGE RIBOSOMAL SUBUNIT PROTEIN BL27M"/>
    <property type="match status" value="1"/>
</dbReference>
<dbReference type="PANTHER" id="PTHR15893">
    <property type="entry name" value="RIBOSOMAL PROTEIN L27"/>
    <property type="match status" value="1"/>
</dbReference>
<dbReference type="Pfam" id="PF01016">
    <property type="entry name" value="Ribosomal_L27"/>
    <property type="match status" value="1"/>
</dbReference>
<dbReference type="PRINTS" id="PR00063">
    <property type="entry name" value="RIBOSOMALL27"/>
</dbReference>
<dbReference type="SUPFAM" id="SSF110324">
    <property type="entry name" value="Ribosomal L27 protein-like"/>
    <property type="match status" value="1"/>
</dbReference>
<dbReference type="PROSITE" id="PS00831">
    <property type="entry name" value="RIBOSOMAL_L27"/>
    <property type="match status" value="1"/>
</dbReference>